<keyword id="KW-0134">Cell wall</keyword>
<keyword id="KW-0903">Direct protein sequencing</keyword>
<keyword id="KW-0964">Secreted</keyword>
<name>UP02_CYCRE</name>
<sequence length="12" mass="1263">LSLTPTPGVLHK</sequence>
<organism>
    <name type="scientific">Cycas revoluta</name>
    <name type="common">Sago palm</name>
    <dbReference type="NCBI Taxonomy" id="3396"/>
    <lineage>
        <taxon>Eukaryota</taxon>
        <taxon>Viridiplantae</taxon>
        <taxon>Streptophyta</taxon>
        <taxon>Embryophyta</taxon>
        <taxon>Tracheophyta</taxon>
        <taxon>Spermatophyta</taxon>
        <taxon>Cycadidae</taxon>
        <taxon>Cycadales</taxon>
        <taxon>Cycadaceae</taxon>
        <taxon>Cycas</taxon>
    </lineage>
</organism>
<comment type="subcellular location">
    <subcellularLocation>
        <location evidence="1">Secreted</location>
        <location evidence="1">Cell wall</location>
    </subcellularLocation>
</comment>
<accession>P85428</accession>
<evidence type="ECO:0000269" key="1">
    <source>
    </source>
</evidence>
<evidence type="ECO:0000303" key="2">
    <source>
    </source>
</evidence>
<evidence type="ECO:0000305" key="3"/>
<protein>
    <recommendedName>
        <fullName>Unknown protein 2</fullName>
    </recommendedName>
</protein>
<dbReference type="GO" id="GO:0005576">
    <property type="term" value="C:extracellular region"/>
    <property type="evidence" value="ECO:0007669"/>
    <property type="project" value="UniProtKB-KW"/>
</dbReference>
<feature type="chain" id="PRO_0000318125" description="Unknown protein 2">
    <location>
        <begin position="1" status="less than"/>
        <end position="12" status="greater than"/>
    </location>
</feature>
<feature type="unsure residue" description="L or I" evidence="1">
    <location>
        <position position="1"/>
    </location>
</feature>
<feature type="unsure residue" description="L or I" evidence="1">
    <location>
        <position position="3"/>
    </location>
</feature>
<feature type="unsure residue" description="L or I" evidence="1">
    <location>
        <position position="10"/>
    </location>
</feature>
<feature type="unsure residue" description="K or Q" evidence="1">
    <location>
        <position position="12"/>
    </location>
</feature>
<feature type="non-terminal residue" evidence="2">
    <location>
        <position position="1"/>
    </location>
</feature>
<feature type="non-terminal residue" evidence="2">
    <location>
        <position position="12"/>
    </location>
</feature>
<proteinExistence type="evidence at protein level"/>
<reference evidence="3" key="1">
    <citation type="journal article" date="2009" name="J. Plant Physiol.">
        <title>Analysis of the soluble cell wall proteome of gymnosperms.</title>
        <authorList>
            <person name="Uzal E.N."/>
            <person name="Gomez-Ros L.V."/>
            <person name="Hernandez J.A."/>
            <person name="Pedreno M.A."/>
            <person name="Cuello J."/>
            <person name="Ros Barcelo A."/>
        </authorList>
    </citation>
    <scope>PROTEIN SEQUENCE</scope>
    <scope>SUBCELLULAR LOCATION</scope>
    <source>
        <tissue evidence="1">Callus</tissue>
    </source>
</reference>